<accession>Q1AXT9</accession>
<comment type="function">
    <text evidence="1">Part of the ABC transporter complex PstSACB involved in phosphate import. Responsible for energy coupling to the transport system.</text>
</comment>
<comment type="catalytic activity">
    <reaction evidence="1">
        <text>phosphate(out) + ATP + H2O = ADP + 2 phosphate(in) + H(+)</text>
        <dbReference type="Rhea" id="RHEA:24440"/>
        <dbReference type="ChEBI" id="CHEBI:15377"/>
        <dbReference type="ChEBI" id="CHEBI:15378"/>
        <dbReference type="ChEBI" id="CHEBI:30616"/>
        <dbReference type="ChEBI" id="CHEBI:43474"/>
        <dbReference type="ChEBI" id="CHEBI:456216"/>
        <dbReference type="EC" id="7.3.2.1"/>
    </reaction>
</comment>
<comment type="subunit">
    <text evidence="1">The complex is composed of two ATP-binding proteins (PstB), two transmembrane proteins (PstC and PstA) and a solute-binding protein (PstS).</text>
</comment>
<comment type="subcellular location">
    <subcellularLocation>
        <location evidence="1">Cell membrane</location>
        <topology evidence="1">Peripheral membrane protein</topology>
    </subcellularLocation>
</comment>
<comment type="similarity">
    <text evidence="1">Belongs to the ABC transporter superfamily. Phosphate importer (TC 3.A.1.7) family.</text>
</comment>
<protein>
    <recommendedName>
        <fullName evidence="1">Phosphate import ATP-binding protein PstB</fullName>
        <ecNumber evidence="1">7.3.2.1</ecNumber>
    </recommendedName>
    <alternativeName>
        <fullName evidence="1">ABC phosphate transporter</fullName>
    </alternativeName>
    <alternativeName>
        <fullName evidence="1">Phosphate-transporting ATPase</fullName>
    </alternativeName>
</protein>
<feature type="chain" id="PRO_0000272518" description="Phosphate import ATP-binding protein PstB">
    <location>
        <begin position="1"/>
        <end position="286"/>
    </location>
</feature>
<feature type="domain" description="ABC transporter" evidence="1">
    <location>
        <begin position="33"/>
        <end position="281"/>
    </location>
</feature>
<feature type="region of interest" description="Disordered" evidence="2">
    <location>
        <begin position="1"/>
        <end position="27"/>
    </location>
</feature>
<feature type="compositionally biased region" description="Basic and acidic residues" evidence="2">
    <location>
        <begin position="15"/>
        <end position="27"/>
    </location>
</feature>
<feature type="binding site" evidence="1">
    <location>
        <begin position="65"/>
        <end position="72"/>
    </location>
    <ligand>
        <name>ATP</name>
        <dbReference type="ChEBI" id="CHEBI:30616"/>
    </ligand>
</feature>
<reference key="1">
    <citation type="submission" date="2006-06" db="EMBL/GenBank/DDBJ databases">
        <title>Complete sequence of Rubrobacter xylanophilus DSM 9941.</title>
        <authorList>
            <consortium name="US DOE Joint Genome Institute"/>
            <person name="Copeland A."/>
            <person name="Lucas S."/>
            <person name="Lapidus A."/>
            <person name="Barry K."/>
            <person name="Detter J.C."/>
            <person name="Glavina del Rio T."/>
            <person name="Hammon N."/>
            <person name="Israni S."/>
            <person name="Dalin E."/>
            <person name="Tice H."/>
            <person name="Pitluck S."/>
            <person name="Munk A.C."/>
            <person name="Brettin T."/>
            <person name="Bruce D."/>
            <person name="Han C."/>
            <person name="Tapia R."/>
            <person name="Gilna P."/>
            <person name="Schmutz J."/>
            <person name="Larimer F."/>
            <person name="Land M."/>
            <person name="Hauser L."/>
            <person name="Kyrpides N."/>
            <person name="Lykidis A."/>
            <person name="da Costa M.S."/>
            <person name="Rainey F.A."/>
            <person name="Empadinhas N."/>
            <person name="Jolivet E."/>
            <person name="Battista J.R."/>
            <person name="Richardson P."/>
        </authorList>
    </citation>
    <scope>NUCLEOTIDE SEQUENCE [LARGE SCALE GENOMIC DNA]</scope>
    <source>
        <strain>DSM 9941 / JCM 11954 / NBRC 16129 / PRD-1</strain>
    </source>
</reference>
<evidence type="ECO:0000255" key="1">
    <source>
        <dbReference type="HAMAP-Rule" id="MF_01702"/>
    </source>
</evidence>
<evidence type="ECO:0000256" key="2">
    <source>
        <dbReference type="SAM" id="MobiDB-lite"/>
    </source>
</evidence>
<organism>
    <name type="scientific">Rubrobacter xylanophilus (strain DSM 9941 / JCM 11954 / NBRC 16129 / PRD-1)</name>
    <dbReference type="NCBI Taxonomy" id="266117"/>
    <lineage>
        <taxon>Bacteria</taxon>
        <taxon>Bacillati</taxon>
        <taxon>Actinomycetota</taxon>
        <taxon>Rubrobacteria</taxon>
        <taxon>Rubrobacterales</taxon>
        <taxon>Rubrobacteraceae</taxon>
        <taxon>Rubrobacter</taxon>
    </lineage>
</organism>
<sequence>MEPKETLRQRWPGRGRTEETGAMKKSDDAPAVMTVEHLNMYYGSFMALKDVSMVIRKNRITALIGPSGCGKSTFIRSLNRMHEIVPGARVEGRVTLDGEDIYAPEVDPVRVRRRVGMVFQKPNPFPTMSIYDNVIAGLKLGRKRKKSELDEIVERTLRQAALWDEVKNKLSESGTSLSGGQQQRLCIARTLALEPEVILMDEPASALDPVSTQKIEDAMLELKEQYTVVIVTHNMQQAARVSDYTGFFFIEDMGQPGQLWEFGETEKIFSNPDRKETEDYVTGRFG</sequence>
<gene>
    <name evidence="1" type="primary">pstB</name>
    <name type="ordered locus">Rxyl_0821</name>
</gene>
<proteinExistence type="inferred from homology"/>
<dbReference type="EC" id="7.3.2.1" evidence="1"/>
<dbReference type="EMBL" id="CP000386">
    <property type="protein sequence ID" value="ABG03789.1"/>
    <property type="molecule type" value="Genomic_DNA"/>
</dbReference>
<dbReference type="SMR" id="Q1AXT9"/>
<dbReference type="STRING" id="266117.Rxyl_0821"/>
<dbReference type="KEGG" id="rxy:Rxyl_0821"/>
<dbReference type="eggNOG" id="COG1117">
    <property type="taxonomic scope" value="Bacteria"/>
</dbReference>
<dbReference type="HOGENOM" id="CLU_000604_1_22_11"/>
<dbReference type="PhylomeDB" id="Q1AXT9"/>
<dbReference type="Proteomes" id="UP000006637">
    <property type="component" value="Chromosome"/>
</dbReference>
<dbReference type="GO" id="GO:0005886">
    <property type="term" value="C:plasma membrane"/>
    <property type="evidence" value="ECO:0007669"/>
    <property type="project" value="UniProtKB-SubCell"/>
</dbReference>
<dbReference type="GO" id="GO:0005524">
    <property type="term" value="F:ATP binding"/>
    <property type="evidence" value="ECO:0007669"/>
    <property type="project" value="UniProtKB-KW"/>
</dbReference>
<dbReference type="GO" id="GO:0016887">
    <property type="term" value="F:ATP hydrolysis activity"/>
    <property type="evidence" value="ECO:0007669"/>
    <property type="project" value="InterPro"/>
</dbReference>
<dbReference type="GO" id="GO:0015415">
    <property type="term" value="F:ATPase-coupled phosphate ion transmembrane transporter activity"/>
    <property type="evidence" value="ECO:0007669"/>
    <property type="project" value="UniProtKB-EC"/>
</dbReference>
<dbReference type="GO" id="GO:0035435">
    <property type="term" value="P:phosphate ion transmembrane transport"/>
    <property type="evidence" value="ECO:0007669"/>
    <property type="project" value="InterPro"/>
</dbReference>
<dbReference type="CDD" id="cd03260">
    <property type="entry name" value="ABC_PstB_phosphate_transporter"/>
    <property type="match status" value="1"/>
</dbReference>
<dbReference type="Gene3D" id="3.40.50.300">
    <property type="entry name" value="P-loop containing nucleotide triphosphate hydrolases"/>
    <property type="match status" value="1"/>
</dbReference>
<dbReference type="InterPro" id="IPR003593">
    <property type="entry name" value="AAA+_ATPase"/>
</dbReference>
<dbReference type="InterPro" id="IPR003439">
    <property type="entry name" value="ABC_transporter-like_ATP-bd"/>
</dbReference>
<dbReference type="InterPro" id="IPR017871">
    <property type="entry name" value="ABC_transporter-like_CS"/>
</dbReference>
<dbReference type="InterPro" id="IPR027417">
    <property type="entry name" value="P-loop_NTPase"/>
</dbReference>
<dbReference type="InterPro" id="IPR005670">
    <property type="entry name" value="PstB-like"/>
</dbReference>
<dbReference type="NCBIfam" id="TIGR00972">
    <property type="entry name" value="3a0107s01c2"/>
    <property type="match status" value="1"/>
</dbReference>
<dbReference type="PANTHER" id="PTHR43423">
    <property type="entry name" value="ABC TRANSPORTER I FAMILY MEMBER 17"/>
    <property type="match status" value="1"/>
</dbReference>
<dbReference type="PANTHER" id="PTHR43423:SF1">
    <property type="entry name" value="ABC TRANSPORTER I FAMILY MEMBER 17"/>
    <property type="match status" value="1"/>
</dbReference>
<dbReference type="Pfam" id="PF00005">
    <property type="entry name" value="ABC_tran"/>
    <property type="match status" value="1"/>
</dbReference>
<dbReference type="SMART" id="SM00382">
    <property type="entry name" value="AAA"/>
    <property type="match status" value="1"/>
</dbReference>
<dbReference type="SUPFAM" id="SSF52540">
    <property type="entry name" value="P-loop containing nucleoside triphosphate hydrolases"/>
    <property type="match status" value="1"/>
</dbReference>
<dbReference type="PROSITE" id="PS00211">
    <property type="entry name" value="ABC_TRANSPORTER_1"/>
    <property type="match status" value="1"/>
</dbReference>
<dbReference type="PROSITE" id="PS50893">
    <property type="entry name" value="ABC_TRANSPORTER_2"/>
    <property type="match status" value="1"/>
</dbReference>
<dbReference type="PROSITE" id="PS51238">
    <property type="entry name" value="PSTB"/>
    <property type="match status" value="1"/>
</dbReference>
<keyword id="KW-0067">ATP-binding</keyword>
<keyword id="KW-1003">Cell membrane</keyword>
<keyword id="KW-0472">Membrane</keyword>
<keyword id="KW-0547">Nucleotide-binding</keyword>
<keyword id="KW-0592">Phosphate transport</keyword>
<keyword id="KW-1185">Reference proteome</keyword>
<keyword id="KW-1278">Translocase</keyword>
<keyword id="KW-0813">Transport</keyword>
<name>PSTB_RUBXD</name>